<keyword id="KW-0997">Cell inner membrane</keyword>
<keyword id="KW-1003">Cell membrane</keyword>
<keyword id="KW-0472">Membrane</keyword>
<keyword id="KW-0812">Transmembrane</keyword>
<keyword id="KW-1133">Transmembrane helix</keyword>
<protein>
    <recommendedName>
        <fullName evidence="1">Fumarate reductase subunit C</fullName>
    </recommendedName>
    <alternativeName>
        <fullName evidence="1">Fumarate reductase 15 kDa hydrophobic protein</fullName>
    </alternativeName>
    <alternativeName>
        <fullName evidence="1">Quinol-fumarate reductase subunit C</fullName>
        <shortName evidence="1">QFR subunit C</shortName>
    </alternativeName>
</protein>
<accession>B1JMQ4</accession>
<dbReference type="EMBL" id="CP000950">
    <property type="protein sequence ID" value="ACA70081.1"/>
    <property type="molecule type" value="Genomic_DNA"/>
</dbReference>
<dbReference type="RefSeq" id="WP_002209135.1">
    <property type="nucleotide sequence ID" value="NZ_CP009792.1"/>
</dbReference>
<dbReference type="SMR" id="B1JMQ4"/>
<dbReference type="GeneID" id="57974250"/>
<dbReference type="KEGG" id="ypy:YPK_3815"/>
<dbReference type="PATRIC" id="fig|502800.11.peg.163"/>
<dbReference type="GO" id="GO:0045283">
    <property type="term" value="C:fumarate reductase complex"/>
    <property type="evidence" value="ECO:0007669"/>
    <property type="project" value="UniProtKB-UniRule"/>
</dbReference>
<dbReference type="GO" id="GO:0005886">
    <property type="term" value="C:plasma membrane"/>
    <property type="evidence" value="ECO:0007669"/>
    <property type="project" value="UniProtKB-SubCell"/>
</dbReference>
<dbReference type="GO" id="GO:0000104">
    <property type="term" value="F:succinate dehydrogenase activity"/>
    <property type="evidence" value="ECO:0007669"/>
    <property type="project" value="UniProtKB-UniRule"/>
</dbReference>
<dbReference type="CDD" id="cd00546">
    <property type="entry name" value="QFR_TypeD_subunitC"/>
    <property type="match status" value="1"/>
</dbReference>
<dbReference type="Gene3D" id="1.20.1300.10">
    <property type="entry name" value="Fumarate reductase/succinate dehydrogenase, transmembrane subunit"/>
    <property type="match status" value="1"/>
</dbReference>
<dbReference type="HAMAP" id="MF_00708">
    <property type="entry name" value="Fumarate_red_C"/>
    <property type="match status" value="1"/>
</dbReference>
<dbReference type="InterPro" id="IPR003510">
    <property type="entry name" value="Fumarate_red_C"/>
</dbReference>
<dbReference type="InterPro" id="IPR034804">
    <property type="entry name" value="SQR/QFR_C/D"/>
</dbReference>
<dbReference type="NCBIfam" id="NF003445">
    <property type="entry name" value="PRK04987.1"/>
    <property type="match status" value="1"/>
</dbReference>
<dbReference type="Pfam" id="PF02300">
    <property type="entry name" value="Fumarate_red_C"/>
    <property type="match status" value="1"/>
</dbReference>
<dbReference type="PIRSF" id="PIRSF000180">
    <property type="entry name" value="FrdC"/>
    <property type="match status" value="1"/>
</dbReference>
<dbReference type="SUPFAM" id="SSF81343">
    <property type="entry name" value="Fumarate reductase respiratory complex transmembrane subunits"/>
    <property type="match status" value="1"/>
</dbReference>
<sequence length="130" mass="14679">MTTKRKAYVRTMAPNWWQQLGFYRFYMLREGTSIPAVWFSVLLIYGVFALKSGPAGWEGFVSFLQNPLVLFLNILTLFAALLHTKTWFELAPKAVNIIVKSEKMGPEPMIKALWVVTVVASAIILAVALL</sequence>
<reference key="1">
    <citation type="submission" date="2008-02" db="EMBL/GenBank/DDBJ databases">
        <title>Complete sequence of Yersinia pseudotuberculosis YPIII.</title>
        <authorList>
            <consortium name="US DOE Joint Genome Institute"/>
            <person name="Copeland A."/>
            <person name="Lucas S."/>
            <person name="Lapidus A."/>
            <person name="Glavina del Rio T."/>
            <person name="Dalin E."/>
            <person name="Tice H."/>
            <person name="Bruce D."/>
            <person name="Goodwin L."/>
            <person name="Pitluck S."/>
            <person name="Munk A.C."/>
            <person name="Brettin T."/>
            <person name="Detter J.C."/>
            <person name="Han C."/>
            <person name="Tapia R."/>
            <person name="Schmutz J."/>
            <person name="Larimer F."/>
            <person name="Land M."/>
            <person name="Hauser L."/>
            <person name="Challacombe J.F."/>
            <person name="Green L."/>
            <person name="Lindler L.E."/>
            <person name="Nikolich M.P."/>
            <person name="Richardson P."/>
        </authorList>
    </citation>
    <scope>NUCLEOTIDE SEQUENCE [LARGE SCALE GENOMIC DNA]</scope>
    <source>
        <strain>YPIII</strain>
    </source>
</reference>
<gene>
    <name evidence="1" type="primary">frdC</name>
    <name type="ordered locus">YPK_3815</name>
</gene>
<name>FRDC_YERPY</name>
<comment type="function">
    <text evidence="1">Two distinct, membrane-bound, FAD-containing enzymes are responsible for the catalysis of fumarate and succinate interconversion; fumarate reductase is used in anaerobic growth, and succinate dehydrogenase is used in aerobic growth. Anchors the catalytic components of the fumarate reductase complex to the cell inner membrane, binds quinones.</text>
</comment>
<comment type="subunit">
    <text evidence="1">Part of an enzyme complex containing four subunits: a flavoprotein (FrdA), an iron-sulfur protein (FrdB), and two hydrophobic anchor proteins (FrdC and FrdD).</text>
</comment>
<comment type="subcellular location">
    <subcellularLocation>
        <location evidence="1">Cell inner membrane</location>
        <topology evidence="1">Multi-pass membrane protein</topology>
    </subcellularLocation>
</comment>
<comment type="similarity">
    <text evidence="1">Belongs to the FrdC family.</text>
</comment>
<proteinExistence type="inferred from homology"/>
<feature type="chain" id="PRO_1000132392" description="Fumarate reductase subunit C">
    <location>
        <begin position="1"/>
        <end position="130"/>
    </location>
</feature>
<feature type="transmembrane region" description="Helical" evidence="1">
    <location>
        <begin position="30"/>
        <end position="50"/>
    </location>
</feature>
<feature type="transmembrane region" description="Helical" evidence="1">
    <location>
        <begin position="60"/>
        <end position="80"/>
    </location>
</feature>
<feature type="transmembrane region" description="Helical" evidence="1">
    <location>
        <begin position="110"/>
        <end position="130"/>
    </location>
</feature>
<organism>
    <name type="scientific">Yersinia pseudotuberculosis serotype O:3 (strain YPIII)</name>
    <dbReference type="NCBI Taxonomy" id="502800"/>
    <lineage>
        <taxon>Bacteria</taxon>
        <taxon>Pseudomonadati</taxon>
        <taxon>Pseudomonadota</taxon>
        <taxon>Gammaproteobacteria</taxon>
        <taxon>Enterobacterales</taxon>
        <taxon>Yersiniaceae</taxon>
        <taxon>Yersinia</taxon>
    </lineage>
</organism>
<evidence type="ECO:0000255" key="1">
    <source>
        <dbReference type="HAMAP-Rule" id="MF_00708"/>
    </source>
</evidence>